<organism>
    <name type="scientific">Oryctolagus cuniculus</name>
    <name type="common">Rabbit</name>
    <dbReference type="NCBI Taxonomy" id="9986"/>
    <lineage>
        <taxon>Eukaryota</taxon>
        <taxon>Metazoa</taxon>
        <taxon>Chordata</taxon>
        <taxon>Craniata</taxon>
        <taxon>Vertebrata</taxon>
        <taxon>Euteleostomi</taxon>
        <taxon>Mammalia</taxon>
        <taxon>Eutheria</taxon>
        <taxon>Euarchontoglires</taxon>
        <taxon>Glires</taxon>
        <taxon>Lagomorpha</taxon>
        <taxon>Leporidae</taxon>
        <taxon>Oryctolagus</taxon>
    </lineage>
</organism>
<accession>O77504</accession>
<proteinExistence type="evidence at transcript level"/>
<protein>
    <recommendedName>
        <fullName>Solute carrier family 22 member 1</fullName>
    </recommendedName>
    <alternativeName>
        <fullName>Organic cation transporter 1</fullName>
    </alternativeName>
    <alternativeName>
        <fullName evidence="7">rbOCT1</fullName>
    </alternativeName>
</protein>
<comment type="function">
    <text evidence="1 2 3 5 6">Electrogenic voltage-dependent transporter that mediates the transport of a variety of organic cations such as endogenous bioactive amines, cationic drugs and xenobiotics (PubMed:12060594, PubMed:9528667). Functions as a pH- and Na(+)-independent, bidirectional transporter (By similarity). Cation cellular uptake or release is driven by the electrochemical potential (i.e. membrane potential and concentration gradient) and substrate selectivity (By similarity). Hydrophobicity is a major requirement for recognition in polyvalent substrates and inhibitors (By similarity). Primarily expressed in the basolateral membrane of hepatocytes and proximal tubules and involved in the uptake and disposition of cationic compounds from the blood by hepatic and renal clearance (By similarity). Most likely functions as an uptake carrier in enterocytes contributing to the intestinal elimination of organic cations from the systemic circulation. Transports endogenous monoamines such as N-1-methylnicotinamide (NMN), guanidine, neurotransmitters dopamine, serotonin, noradrenaline, adrenaline and histamine, and quaternary ammonium compound such as choline. Also transports natural polyamines such as spermidine, agmatine and putrescine at low affinity, but relatively high turnover. Involved in the hepatic and intestinal uptake of the vitamin B1/thiamine, hence regulating hepatic lipid and energy metabolism. Contributes to the influx and efflux of fatty acid carriers carnitines and acylcarnitines across the basolateral membrane of hepatocytes, from the liver to the systemic circulation and inversely and may be involved in regulating the systemic availability of hepatic acylcarnitines (By similarity). Also capable of transporting non-amine endogenous compounds such as prostaglandin E2 (PGE2) and prostaglandin F2-alpha (PGF2-alpha) (By similarity). May contribute to the transport of cationic compounds in testes across the blood-testis-barrier (By similarity). Also mediates the uptake of xenobiotics tributylmethylammonium (TBuMA), quinidine, N-methyl-quinine (NMQ), N-methyl-quinidine (NMQD) N-(4,4-azo-n-pentyl)-quinuclidine (APQ), azidoprocainamide methoiodide (AMP), N-(4,4-azo-n-pentyl)-21-deoxyajmalinium (APDA) and 4-(4-(dimethylamino)styryl)-N-methylpyridinium (ASP) (PubMed:12060594).</text>
</comment>
<comment type="catalytic activity">
    <reaction evidence="3">
        <text>1-methylnicotinamide(out) = 1-methylnicotinamide(in)</text>
        <dbReference type="Rhea" id="RHEA:73859"/>
        <dbReference type="ChEBI" id="CHEBI:16797"/>
    </reaction>
</comment>
<comment type="catalytic activity">
    <reaction evidence="1">
        <text>dopamine(out) = dopamine(in)</text>
        <dbReference type="Rhea" id="RHEA:73863"/>
        <dbReference type="ChEBI" id="CHEBI:59905"/>
    </reaction>
</comment>
<comment type="catalytic activity">
    <reaction evidence="1">
        <text>serotonin(out) = serotonin(in)</text>
        <dbReference type="Rhea" id="RHEA:73867"/>
        <dbReference type="ChEBI" id="CHEBI:350546"/>
    </reaction>
</comment>
<comment type="catalytic activity">
    <reaction evidence="1">
        <text>(R)-adrenaline(out) = (R)-adrenaline(in)</text>
        <dbReference type="Rhea" id="RHEA:73875"/>
        <dbReference type="ChEBI" id="CHEBI:71406"/>
    </reaction>
</comment>
<comment type="catalytic activity">
    <reaction evidence="1">
        <text>(R)-noradrenaline(out) = (R)-noradrenaline(in)</text>
        <dbReference type="Rhea" id="RHEA:73871"/>
        <dbReference type="ChEBI" id="CHEBI:72587"/>
    </reaction>
</comment>
<comment type="catalytic activity">
    <reaction evidence="1">
        <text>histamine(out) = histamine(in)</text>
        <dbReference type="Rhea" id="RHEA:73879"/>
        <dbReference type="ChEBI" id="CHEBI:58432"/>
    </reaction>
</comment>
<comment type="catalytic activity">
    <reaction evidence="3">
        <text>guanidine(out) = guanidine(in)</text>
        <dbReference type="Rhea" id="RHEA:73883"/>
        <dbReference type="ChEBI" id="CHEBI:30087"/>
    </reaction>
</comment>
<comment type="catalytic activity">
    <reaction evidence="1">
        <text>choline(out) = choline(in)</text>
        <dbReference type="Rhea" id="RHEA:32751"/>
        <dbReference type="ChEBI" id="CHEBI:15354"/>
    </reaction>
</comment>
<comment type="catalytic activity">
    <reaction evidence="2">
        <text>acetylcholine(in) = acetylcholine(out)</text>
        <dbReference type="Rhea" id="RHEA:74663"/>
        <dbReference type="ChEBI" id="CHEBI:15355"/>
    </reaction>
</comment>
<comment type="catalytic activity">
    <reaction evidence="1">
        <text>thiamine(in) = thiamine(out)</text>
        <dbReference type="Rhea" id="RHEA:34919"/>
        <dbReference type="ChEBI" id="CHEBI:18385"/>
    </reaction>
</comment>
<comment type="catalytic activity">
    <reaction evidence="1">
        <text>spermidine(in) = spermidine(out)</text>
        <dbReference type="Rhea" id="RHEA:35039"/>
        <dbReference type="ChEBI" id="CHEBI:57834"/>
    </reaction>
</comment>
<comment type="catalytic activity">
    <reaction evidence="2">
        <text>agmatine(out) = agmatine(in)</text>
        <dbReference type="Rhea" id="RHEA:72131"/>
        <dbReference type="ChEBI" id="CHEBI:58145"/>
    </reaction>
</comment>
<comment type="catalytic activity">
    <reaction evidence="2">
        <text>putrescine(out) = putrescine(in)</text>
        <dbReference type="Rhea" id="RHEA:72135"/>
        <dbReference type="ChEBI" id="CHEBI:326268"/>
    </reaction>
</comment>
<comment type="catalytic activity">
    <reaction evidence="1">
        <text>(R)-carnitine(in) = (R)-carnitine(out)</text>
        <dbReference type="Rhea" id="RHEA:34959"/>
        <dbReference type="ChEBI" id="CHEBI:16347"/>
    </reaction>
</comment>
<comment type="catalytic activity">
    <reaction evidence="1">
        <text>O-isobutanoyl-(R)-carnitine(in) = O-isobutanoyl-(R)-carnitine(out)</text>
        <dbReference type="Rhea" id="RHEA:74315"/>
        <dbReference type="ChEBI" id="CHEBI:84838"/>
    </reaction>
</comment>
<comment type="catalytic activity">
    <reaction evidence="1">
        <text>O-acetyl-(R)-carnitine(in) = O-acetyl-(R)-carnitine(out)</text>
        <dbReference type="Rhea" id="RHEA:74319"/>
        <dbReference type="ChEBI" id="CHEBI:57589"/>
    </reaction>
</comment>
<comment type="catalytic activity">
    <reaction evidence="1">
        <text>O-3-hydroxybutanoyl-(R)-carnitine(in) = O-3-hydroxybutanoyl-(R)-carnitine(out)</text>
        <dbReference type="Rhea" id="RHEA:74323"/>
        <dbReference type="ChEBI" id="CHEBI:84842"/>
    </reaction>
</comment>
<comment type="catalytic activity">
    <reaction evidence="1">
        <text>O-propanoyl-(R)-carnitine(in) = O-propanoyl-(R)-carnitine(out)</text>
        <dbReference type="Rhea" id="RHEA:74327"/>
        <dbReference type="ChEBI" id="CHEBI:53210"/>
    </reaction>
</comment>
<comment type="catalytic activity">
    <reaction evidence="1">
        <text>O-butanoyl-(R)-carnitine(in) = O-butanoyl-(R)-carnitine(out)</text>
        <dbReference type="Rhea" id="RHEA:74331"/>
        <dbReference type="ChEBI" id="CHEBI:21949"/>
    </reaction>
</comment>
<comment type="catalytic activity">
    <reaction evidence="1">
        <text>O-2-methylbutanoyl-(R)-carnitine(in) = O-2-methylbutanoyl-(R)-carnitine(out)</text>
        <dbReference type="Rhea" id="RHEA:74335"/>
        <dbReference type="ChEBI" id="CHEBI:84840"/>
    </reaction>
</comment>
<comment type="catalytic activity">
    <reaction evidence="1">
        <text>O-3-methylbutanoyl-(R)-carnitine(in) = O-3-methylbutanoyl-(R)-carnitine(out)</text>
        <dbReference type="Rhea" id="RHEA:74339"/>
        <dbReference type="ChEBI" id="CHEBI:70819"/>
    </reaction>
</comment>
<comment type="catalytic activity">
    <reaction evidence="1">
        <text>O-hexanoyl-(R)-carnitine(in) = O-hexanoyl-(R)-carnitine(out)</text>
        <dbReference type="Rhea" id="RHEA:74343"/>
        <dbReference type="ChEBI" id="CHEBI:84834"/>
    </reaction>
</comment>
<comment type="catalytic activity">
    <reaction evidence="2">
        <text>L-histidyl-L-proline diketopiperazine(in) = L-histidyl-L-proline diketopiperazine(out)</text>
        <dbReference type="Rhea" id="RHEA:74787"/>
        <dbReference type="ChEBI" id="CHEBI:90039"/>
    </reaction>
</comment>
<comment type="catalytic activity">
    <reaction evidence="2">
        <text>(R)-salsolinol(in) = (R)-salsolinol(out)</text>
        <dbReference type="Rhea" id="RHEA:74791"/>
        <dbReference type="ChEBI" id="CHEBI:194082"/>
    </reaction>
</comment>
<comment type="catalytic activity">
    <reaction evidence="2">
        <text>prostaglandin F2alpha(out) = prostaglandin F2alpha(in)</text>
        <dbReference type="Rhea" id="RHEA:50988"/>
        <dbReference type="ChEBI" id="CHEBI:57404"/>
    </reaction>
</comment>
<comment type="catalytic activity">
    <reaction evidence="2">
        <text>prostaglandin E2(out) = prostaglandin E2(in)</text>
        <dbReference type="Rhea" id="RHEA:50984"/>
        <dbReference type="ChEBI" id="CHEBI:606564"/>
    </reaction>
</comment>
<comment type="activity regulation">
    <text evidence="2 3">Phosphorylation of the transporter leads to changes in its substrate affinity, resulting in a regulation of the transport activity. In contrast with rat ortholog, ASP uptake is inhibited by protein kinase A (PKA) and C (PKC) activation. ASP uptake is also endogenously activated by calmodulin, the calmodulin-dependent kinase II and LCK tyrosine kinase (By similarity). Inhibited by cGMP, most likely through a cGMP-binding protein that interacts with OCT1 (By similarity).</text>
</comment>
<comment type="subcellular location">
    <subcellularLocation>
        <location evidence="1">Basolateral cell membrane</location>
        <topology evidence="8">Multi-pass membrane protein</topology>
    </subcellularLocation>
    <subcellularLocation>
        <location evidence="1">Apical cell membrane</location>
        <topology evidence="8">Multi-pass membrane protein</topology>
    </subcellularLocation>
    <subcellularLocation>
        <location evidence="2">Lateral cell membrane</location>
        <topology evidence="8">Multi-pass membrane protein</topology>
    </subcellularLocation>
    <subcellularLocation>
        <location evidence="2">Basal cell membrane</location>
        <topology evidence="8">Multi-pass membrane protein</topology>
    </subcellularLocation>
    <text evidence="1 2 3">Localized to the sinusoidal/basolateral membrane of hepatocytes (By similarity). Mainly localized to the basolateral membrane of renal proximal tubular cells (By similarity). However, also identified at the apical side of proximal tubular cells. Mainly expressed at the lateral membrane of enterocytes (By similarity). Also observed at the apical side of enterocytes (By similarity). Localized to the basal membrane of Sertoli cells (By similarity).</text>
</comment>
<comment type="tissue specificity">
    <text evidence="6">Expressed in kidney, liver and intestine.</text>
</comment>
<comment type="domain">
    <text evidence="3">A large substrate binding region with partially overlapping binding domains for structurally different substrates is formed by several transmembrane helix domains (TMH) including TMH 2, 4, 10 and 11, and it is alternatingly exposed to the extracellular or intracellular side during substrate transport.</text>
</comment>
<comment type="domain">
    <text evidence="2">Contains one proline-rich sequence (Pro-Glu-Ser-Pro-Arg) that is required for transport activity.</text>
</comment>
<comment type="PTM">
    <text evidence="3">Phosphorylated.</text>
</comment>
<comment type="miscellaneous">
    <text evidence="2 6">Involved in the uptake of clinically used drugs including diabete treatment medicine metformin, neurotoxins 1-methyl-4-phenylpyridinium (MPP(+)) and iobenguane and platinum-based drug cisplatin (PubMed:9528667). Also involved in metformin efflux transport (By similarity). Metformin competitively inhibits OCT1-mediated thiamine uptake, leading to a decrease in hepatic steatosis (By similarity). Plays a role in the anticancer activity of cisplatin and may contribute to antitumor specificity (By similarity).</text>
</comment>
<comment type="similarity">
    <text evidence="8">Belongs to the major facilitator (TC 2.A.1) superfamily. Organic cation transporter (TC 2.A.1.19) family.</text>
</comment>
<comment type="caution">
    <text evidence="1 2 3">Cellular localization of OCT1 in the intestine and the kidney remains to be finally defined. While most authors have deduced a localization at the basolateral side of enterocytes consistent with a physiological role in organic anions uptake from the blood flow and intestinal excretion (By similarity), other studies demonstrated an apical localization (By similarity), supporting a function in intestinal absorption of organic anions and drugs (By similarity). Similarly, contradictory findings have shown a localization to the basolateral side (By similarity) or to the apical side (By similarity) of proximal tubules (By similarity). Affinity and capacity of the transporter for endogenous substrates vary among orthologs (By similarity).</text>
</comment>
<reference key="1">
    <citation type="journal article" date="1998" name="Biochim. Biophys. Acta">
        <title>Molecular cloning and functional expression of a rabbit renal organic cation transporter.</title>
        <authorList>
            <person name="Terashita S."/>
            <person name="Dresser M.J."/>
            <person name="Zhang L."/>
            <person name="Gray A.T."/>
            <person name="Yost S.C."/>
            <person name="Giacomini K.M."/>
        </authorList>
    </citation>
    <scope>NUCLEOTIDE SEQUENCE [MRNA]</scope>
    <scope>FUNCTION</scope>
    <scope>TISSUE SPECIFICITY</scope>
    <scope>MISCELLANEOUS</scope>
    <source>
        <strain>New Zealand</strain>
    </source>
</reference>
<reference key="2">
    <citation type="journal article" date="2002" name="Am. J. Physiol.">
        <title>Molecular cloning of rabbit organic cation transporter rbOCT2 and functional comparisons with rbOCT1.</title>
        <authorList>
            <person name="Zhang X."/>
            <person name="Evans K.K."/>
            <person name="Wright S.H."/>
        </authorList>
    </citation>
    <scope>FUNCTION</scope>
</reference>
<name>S22A1_RABIT</name>
<sequence>MPTVDDVLEQVGEFGWFQKRTFLFLCLISAILAPIYLGIVFLGFTPDHRCRSPGVDELSQRCGWSPEEELNYTVPGLGATDGAFVRQCMRYEVDWNQSSLGCVDPLASLAPNRSHLPLGPCQHGWVYDTPGSSIVTEFNLVCADAWKVDLFQSCVNLGFFLGSLGVGYIADRFGRKLCLLLTTLINAVSGVLTAVAPDYTSMLLFRLLQGLVSKGSWMSGYTLITEFVGSGYRRTVAILYQVAFSVGLVALSGVAYAIPNWRWLQLTVSLPTFLCLFYYWCVPESPRWLLSQKRNTDAVKIMDNIAQKNGKLPPADLKMLSLDEDVTEKLSPSLADLFRTPNLRKHTFILMFLWFTCSVLYQGLILHMGATGGNVYLDFFYSSLVEFPAAFVILVTIDRVGRIYPMAASNLAAGVASVILIFVPQDLHWLTIVLSCVGRMGATIVLQMICLVNAELYPTFVRNLGVMVCSALCDVGGIITPFMVFRLMEVWQPLPLIVFGVLGLLAGGMTLLLPETKGVALPETIEDAENLRRKAKPKESKIYLQVQTSELKGP</sequence>
<gene>
    <name type="primary">SLC22A1</name>
    <name type="synonym">OCT1</name>
</gene>
<evidence type="ECO:0000250" key="1">
    <source>
        <dbReference type="UniProtKB" id="O08966"/>
    </source>
</evidence>
<evidence type="ECO:0000250" key="2">
    <source>
        <dbReference type="UniProtKB" id="O15245"/>
    </source>
</evidence>
<evidence type="ECO:0000250" key="3">
    <source>
        <dbReference type="UniProtKB" id="Q63089"/>
    </source>
</evidence>
<evidence type="ECO:0000255" key="4"/>
<evidence type="ECO:0000269" key="5">
    <source>
    </source>
</evidence>
<evidence type="ECO:0000269" key="6">
    <source>
    </source>
</evidence>
<evidence type="ECO:0000303" key="7">
    <source>
    </source>
</evidence>
<evidence type="ECO:0000305" key="8"/>
<feature type="chain" id="PRO_0000333878" description="Solute carrier family 22 member 1">
    <location>
        <begin position="1"/>
        <end position="554"/>
    </location>
</feature>
<feature type="topological domain" description="Cytoplasmic" evidence="4">
    <location>
        <begin position="1"/>
        <end position="21"/>
    </location>
</feature>
<feature type="transmembrane region" description="Helical" evidence="4">
    <location>
        <begin position="22"/>
        <end position="42"/>
    </location>
</feature>
<feature type="topological domain" description="Extracellular" evidence="4">
    <location>
        <begin position="43"/>
        <end position="149"/>
    </location>
</feature>
<feature type="transmembrane region" description="Helical" evidence="4">
    <location>
        <begin position="150"/>
        <end position="170"/>
    </location>
</feature>
<feature type="topological domain" description="Cytoplasmic" evidence="4">
    <location>
        <begin position="171"/>
        <end position="176"/>
    </location>
</feature>
<feature type="transmembrane region" description="Helical" evidence="4">
    <location>
        <begin position="177"/>
        <end position="197"/>
    </location>
</feature>
<feature type="topological domain" description="Extracellular" evidence="4">
    <location>
        <begin position="198"/>
        <end position="206"/>
    </location>
</feature>
<feature type="transmembrane region" description="Helical" evidence="4">
    <location>
        <begin position="207"/>
        <end position="229"/>
    </location>
</feature>
<feature type="topological domain" description="Cytoplasmic" evidence="4">
    <location>
        <begin position="230"/>
        <end position="237"/>
    </location>
</feature>
<feature type="transmembrane region" description="Helical" evidence="4">
    <location>
        <begin position="238"/>
        <end position="258"/>
    </location>
</feature>
<feature type="topological domain" description="Extracellular" evidence="4">
    <location>
        <begin position="259"/>
        <end position="262"/>
    </location>
</feature>
<feature type="transmembrane region" description="Helical" evidence="4">
    <location>
        <begin position="263"/>
        <end position="283"/>
    </location>
</feature>
<feature type="topological domain" description="Cytoplasmic" evidence="4">
    <location>
        <begin position="284"/>
        <end position="347"/>
    </location>
</feature>
<feature type="transmembrane region" description="Helical" evidence="4">
    <location>
        <begin position="348"/>
        <end position="368"/>
    </location>
</feature>
<feature type="topological domain" description="Extracellular" evidence="4">
    <location>
        <begin position="369"/>
        <end position="374"/>
    </location>
</feature>
<feature type="transmembrane region" description="Helical" evidence="4">
    <location>
        <begin position="375"/>
        <end position="395"/>
    </location>
</feature>
<feature type="topological domain" description="Cytoplasmic" evidence="4">
    <location>
        <begin position="396"/>
        <end position="402"/>
    </location>
</feature>
<feature type="transmembrane region" description="Helical" evidence="4">
    <location>
        <begin position="403"/>
        <end position="423"/>
    </location>
</feature>
<feature type="topological domain" description="Extracellular" evidence="4">
    <location>
        <begin position="424"/>
        <end position="431"/>
    </location>
</feature>
<feature type="transmembrane region" description="Helical" evidence="4">
    <location>
        <begin position="432"/>
        <end position="452"/>
    </location>
</feature>
<feature type="topological domain" description="Cytoplasmic" evidence="4">
    <location>
        <begin position="453"/>
        <end position="464"/>
    </location>
</feature>
<feature type="transmembrane region" description="Helical" evidence="4">
    <location>
        <begin position="465"/>
        <end position="485"/>
    </location>
</feature>
<feature type="topological domain" description="Extracellular" evidence="4">
    <location>
        <begin position="486"/>
        <end position="492"/>
    </location>
</feature>
<feature type="transmembrane region" description="Helical" evidence="4">
    <location>
        <begin position="493"/>
        <end position="513"/>
    </location>
</feature>
<feature type="topological domain" description="Cytoplasmic" evidence="4">
    <location>
        <begin position="514"/>
        <end position="554"/>
    </location>
</feature>
<feature type="short sequence motif" description="Proline-rich sequence" evidence="2">
    <location>
        <begin position="283"/>
        <end position="287"/>
    </location>
</feature>
<feature type="modified residue" description="Phosphoserine" evidence="1">
    <location>
        <position position="333"/>
    </location>
</feature>
<feature type="glycosylation site" description="N-linked (GlcNAc...) asparagine" evidence="4">
    <location>
        <position position="71"/>
    </location>
</feature>
<keyword id="KW-1003">Cell membrane</keyword>
<keyword id="KW-0325">Glycoprotein</keyword>
<keyword id="KW-0406">Ion transport</keyword>
<keyword id="KW-0472">Membrane</keyword>
<keyword id="KW-0597">Phosphoprotein</keyword>
<keyword id="KW-1185">Reference proteome</keyword>
<keyword id="KW-0812">Transmembrane</keyword>
<keyword id="KW-1133">Transmembrane helix</keyword>
<keyword id="KW-0813">Transport</keyword>
<dbReference type="EMBL" id="AF015958">
    <property type="protein sequence ID" value="AAC23661.1"/>
    <property type="molecule type" value="mRNA"/>
</dbReference>
<dbReference type="RefSeq" id="NP_001075491.1">
    <property type="nucleotide sequence ID" value="NM_001082022.1"/>
</dbReference>
<dbReference type="SMR" id="O77504"/>
<dbReference type="FunCoup" id="O77504">
    <property type="interactions" value="40"/>
</dbReference>
<dbReference type="STRING" id="9986.ENSOCUP00000002189"/>
<dbReference type="GlyCosmos" id="O77504">
    <property type="glycosylation" value="1 site, No reported glycans"/>
</dbReference>
<dbReference type="PaxDb" id="9986-ENSOCUP00000002189"/>
<dbReference type="GeneID" id="100008659"/>
<dbReference type="KEGG" id="ocu:100008659"/>
<dbReference type="CTD" id="6580"/>
<dbReference type="eggNOG" id="KOG0255">
    <property type="taxonomic scope" value="Eukaryota"/>
</dbReference>
<dbReference type="InParanoid" id="O77504"/>
<dbReference type="OrthoDB" id="5141738at2759"/>
<dbReference type="TreeFam" id="TF315847"/>
<dbReference type="Proteomes" id="UP000001811">
    <property type="component" value="Unplaced"/>
</dbReference>
<dbReference type="GO" id="GO:0016324">
    <property type="term" value="C:apical plasma membrane"/>
    <property type="evidence" value="ECO:0000250"/>
    <property type="project" value="UniProtKB"/>
</dbReference>
<dbReference type="GO" id="GO:0009925">
    <property type="term" value="C:basal plasma membrane"/>
    <property type="evidence" value="ECO:0000250"/>
    <property type="project" value="UniProtKB"/>
</dbReference>
<dbReference type="GO" id="GO:0016323">
    <property type="term" value="C:basolateral plasma membrane"/>
    <property type="evidence" value="ECO:0000250"/>
    <property type="project" value="UniProtKB"/>
</dbReference>
<dbReference type="GO" id="GO:0016328">
    <property type="term" value="C:lateral plasma membrane"/>
    <property type="evidence" value="ECO:0000250"/>
    <property type="project" value="UniProtKB"/>
</dbReference>
<dbReference type="GO" id="GO:1901235">
    <property type="term" value="F:(R)-carnitine transmembrane transporter activity"/>
    <property type="evidence" value="ECO:0000250"/>
    <property type="project" value="UniProtKB"/>
</dbReference>
<dbReference type="GO" id="GO:0005277">
    <property type="term" value="F:acetylcholine transmembrane transporter activity"/>
    <property type="evidence" value="ECO:0000250"/>
    <property type="project" value="UniProtKB"/>
</dbReference>
<dbReference type="GO" id="GO:0008504">
    <property type="term" value="F:monoamine transmembrane transporter activity"/>
    <property type="evidence" value="ECO:0000250"/>
    <property type="project" value="UniProtKB"/>
</dbReference>
<dbReference type="GO" id="GO:0005326">
    <property type="term" value="F:neurotransmitter transmembrane transporter activity"/>
    <property type="evidence" value="ECO:0000250"/>
    <property type="project" value="UniProtKB"/>
</dbReference>
<dbReference type="GO" id="GO:0008514">
    <property type="term" value="F:organic anion transmembrane transporter activity"/>
    <property type="evidence" value="ECO:0000250"/>
    <property type="project" value="UniProtKB"/>
</dbReference>
<dbReference type="GO" id="GO:0015101">
    <property type="term" value="F:organic cation transmembrane transporter activity"/>
    <property type="evidence" value="ECO:0000250"/>
    <property type="project" value="UniProtKB"/>
</dbReference>
<dbReference type="GO" id="GO:0015132">
    <property type="term" value="F:prostaglandin transmembrane transporter activity"/>
    <property type="evidence" value="ECO:0000250"/>
    <property type="project" value="UniProtKB"/>
</dbReference>
<dbReference type="GO" id="GO:0015489">
    <property type="term" value="F:putrescine transmembrane transporter activity"/>
    <property type="evidence" value="ECO:0000250"/>
    <property type="project" value="UniProtKB"/>
</dbReference>
<dbReference type="GO" id="GO:0015651">
    <property type="term" value="F:quaternary ammonium group transmembrane transporter activity"/>
    <property type="evidence" value="ECO:0000250"/>
    <property type="project" value="UniProtKB"/>
</dbReference>
<dbReference type="GO" id="GO:0015606">
    <property type="term" value="F:spermidine transmembrane transporter activity"/>
    <property type="evidence" value="ECO:0000250"/>
    <property type="project" value="UniProtKB"/>
</dbReference>
<dbReference type="GO" id="GO:0042910">
    <property type="term" value="F:xenobiotic transmembrane transporter activity"/>
    <property type="evidence" value="ECO:0000314"/>
    <property type="project" value="UniProtKB"/>
</dbReference>
<dbReference type="GO" id="GO:1902270">
    <property type="term" value="P:(R)-carnitine transmembrane transport"/>
    <property type="evidence" value="ECO:0000250"/>
    <property type="project" value="UniProtKB"/>
</dbReference>
<dbReference type="GO" id="GO:0015870">
    <property type="term" value="P:acetylcholine transport"/>
    <property type="evidence" value="ECO:0000250"/>
    <property type="project" value="UniProtKB"/>
</dbReference>
<dbReference type="GO" id="GO:0015872">
    <property type="term" value="P:dopamine transport"/>
    <property type="evidence" value="ECO:0000250"/>
    <property type="project" value="UniProtKB"/>
</dbReference>
<dbReference type="GO" id="GO:0015844">
    <property type="term" value="P:monoamine transport"/>
    <property type="evidence" value="ECO:0000250"/>
    <property type="project" value="UniProtKB"/>
</dbReference>
<dbReference type="GO" id="GO:0006811">
    <property type="term" value="P:monoatomic ion transport"/>
    <property type="evidence" value="ECO:0007669"/>
    <property type="project" value="UniProtKB-KW"/>
</dbReference>
<dbReference type="GO" id="GO:0015874">
    <property type="term" value="P:norepinephrine transport"/>
    <property type="evidence" value="ECO:0000250"/>
    <property type="project" value="UniProtKB"/>
</dbReference>
<dbReference type="GO" id="GO:1902616">
    <property type="term" value="P:O-acyl-L-carnitine transmembrane transport"/>
    <property type="evidence" value="ECO:0000250"/>
    <property type="project" value="UniProtKB"/>
</dbReference>
<dbReference type="GO" id="GO:0015732">
    <property type="term" value="P:prostaglandin transport"/>
    <property type="evidence" value="ECO:0000250"/>
    <property type="project" value="UniProtKB"/>
</dbReference>
<dbReference type="GO" id="GO:0015847">
    <property type="term" value="P:putrescine transport"/>
    <property type="evidence" value="ECO:0000250"/>
    <property type="project" value="UniProtKB"/>
</dbReference>
<dbReference type="GO" id="GO:0006837">
    <property type="term" value="P:serotonin transport"/>
    <property type="evidence" value="ECO:0000250"/>
    <property type="project" value="UniProtKB"/>
</dbReference>
<dbReference type="GO" id="GO:0015848">
    <property type="term" value="P:spermidine transport"/>
    <property type="evidence" value="ECO:0000250"/>
    <property type="project" value="UniProtKB"/>
</dbReference>
<dbReference type="GO" id="GO:0071934">
    <property type="term" value="P:thiamine transmembrane transport"/>
    <property type="evidence" value="ECO:0000250"/>
    <property type="project" value="UniProtKB"/>
</dbReference>
<dbReference type="GO" id="GO:0015888">
    <property type="term" value="P:thiamine transport"/>
    <property type="evidence" value="ECO:0000250"/>
    <property type="project" value="UniProtKB"/>
</dbReference>
<dbReference type="GO" id="GO:0042908">
    <property type="term" value="P:xenobiotic transport"/>
    <property type="evidence" value="ECO:0000314"/>
    <property type="project" value="UniProtKB"/>
</dbReference>
<dbReference type="CDD" id="cd17379">
    <property type="entry name" value="MFS_SLC22A1_2_3"/>
    <property type="match status" value="1"/>
</dbReference>
<dbReference type="FunFam" id="1.20.1250.20:FF:000148">
    <property type="entry name" value="Solute carrier family 22 member 2"/>
    <property type="match status" value="1"/>
</dbReference>
<dbReference type="Gene3D" id="1.20.1250.20">
    <property type="entry name" value="MFS general substrate transporter like domains"/>
    <property type="match status" value="1"/>
</dbReference>
<dbReference type="InterPro" id="IPR020846">
    <property type="entry name" value="MFS_dom"/>
</dbReference>
<dbReference type="InterPro" id="IPR005828">
    <property type="entry name" value="MFS_sugar_transport-like"/>
</dbReference>
<dbReference type="InterPro" id="IPR036259">
    <property type="entry name" value="MFS_trans_sf"/>
</dbReference>
<dbReference type="InterPro" id="IPR004749">
    <property type="entry name" value="Orgcat_transp/SVOP"/>
</dbReference>
<dbReference type="InterPro" id="IPR005829">
    <property type="entry name" value="Sugar_transporter_CS"/>
</dbReference>
<dbReference type="NCBIfam" id="TIGR00898">
    <property type="entry name" value="2A0119"/>
    <property type="match status" value="1"/>
</dbReference>
<dbReference type="PANTHER" id="PTHR24064">
    <property type="entry name" value="SOLUTE CARRIER FAMILY 22 MEMBER"/>
    <property type="match status" value="1"/>
</dbReference>
<dbReference type="Pfam" id="PF00083">
    <property type="entry name" value="Sugar_tr"/>
    <property type="match status" value="1"/>
</dbReference>
<dbReference type="SUPFAM" id="SSF103473">
    <property type="entry name" value="MFS general substrate transporter"/>
    <property type="match status" value="1"/>
</dbReference>
<dbReference type="PROSITE" id="PS50850">
    <property type="entry name" value="MFS"/>
    <property type="match status" value="1"/>
</dbReference>
<dbReference type="PROSITE" id="PS00216">
    <property type="entry name" value="SUGAR_TRANSPORT_1"/>
    <property type="match status" value="1"/>
</dbReference>